<accession>Q9BYV2</accession>
<accession>A5D8T7</accession>
<accession>Q53SY4</accession>
<accession>Q9BYV3</accession>
<evidence type="ECO:0000250" key="1"/>
<evidence type="ECO:0000255" key="2"/>
<evidence type="ECO:0000255" key="3">
    <source>
        <dbReference type="PROSITE-ProRule" id="PRU00024"/>
    </source>
</evidence>
<evidence type="ECO:0000255" key="4">
    <source>
        <dbReference type="PROSITE-ProRule" id="PRU00175"/>
    </source>
</evidence>
<evidence type="ECO:0000255" key="5">
    <source>
        <dbReference type="PROSITE-ProRule" id="PRU00586"/>
    </source>
</evidence>
<evidence type="ECO:0000256" key="6">
    <source>
        <dbReference type="SAM" id="MobiDB-lite"/>
    </source>
</evidence>
<evidence type="ECO:0000269" key="7">
    <source>
    </source>
</evidence>
<evidence type="ECO:0000269" key="8">
    <source ref="5"/>
</evidence>
<evidence type="ECO:0000303" key="9">
    <source>
    </source>
</evidence>
<evidence type="ECO:0000305" key="10"/>
<evidence type="ECO:0007829" key="11">
    <source>
        <dbReference type="PDB" id="3Q1D"/>
    </source>
</evidence>
<comment type="function">
    <text evidence="1">May bind and stabilize microtubules during myotubes formation.</text>
</comment>
<comment type="subunit">
    <text evidence="1 7 8">Homooligomer and heterooligomer. Interacts with tubulin (By similarity). Interacts with TRIM63 and probably with TRIM55.</text>
</comment>
<comment type="interaction">
    <interactant intactId="EBI-2130429">
        <id>Q9BYV2</id>
    </interactant>
    <interactant intactId="EBI-2838710">
        <id>Q8NFM4</id>
        <label>ADCY4</label>
    </interactant>
    <organismsDiffer>false</organismsDiffer>
    <experiments>3</experiments>
</comment>
<comment type="interaction">
    <interactant intactId="EBI-2130429">
        <id>Q9BYV2</id>
    </interactant>
    <interactant intactId="EBI-3956936">
        <id>Q9BRQ8</id>
        <label>AIFM2</label>
    </interactant>
    <organismsDiffer>false</organismsDiffer>
    <experiments>3</experiments>
</comment>
<comment type="interaction">
    <interactant intactId="EBI-2130429">
        <id>Q9BYV2</id>
    </interactant>
    <interactant intactId="EBI-8643161">
        <id>Q9NX04</id>
        <label>AIRIM</label>
    </interactant>
    <organismsDiffer>false</organismsDiffer>
    <experiments>6</experiments>
</comment>
<comment type="interaction">
    <interactant intactId="EBI-2130429">
        <id>Q9BYV2</id>
    </interactant>
    <interactant intactId="EBI-17183751">
        <id>X5D778</id>
        <label>ANKRD11</label>
    </interactant>
    <organismsDiffer>false</organismsDiffer>
    <experiments>3</experiments>
</comment>
<comment type="interaction">
    <interactant intactId="EBI-2130429">
        <id>Q9BYV2</id>
    </interactant>
    <interactant intactId="EBI-638194">
        <id>P53365</id>
        <label>ARFIP2</label>
    </interactant>
    <organismsDiffer>false</organismsDiffer>
    <experiments>3</experiments>
</comment>
<comment type="interaction">
    <interactant intactId="EBI-2130429">
        <id>Q9BYV2</id>
    </interactant>
    <interactant intactId="EBI-602199">
        <id>Q12774</id>
        <label>ARHGEF5</label>
    </interactant>
    <organismsDiffer>false</organismsDiffer>
    <experiments>6</experiments>
</comment>
<comment type="interaction">
    <interactant intactId="EBI-2130429">
        <id>Q9BYV2</id>
    </interactant>
    <interactant intactId="EBI-1642523">
        <id>Q15052</id>
        <label>ARHGEF6</label>
    </interactant>
    <organismsDiffer>false</organismsDiffer>
    <experiments>3</experiments>
</comment>
<comment type="interaction">
    <interactant intactId="EBI-2130429">
        <id>Q9BYV2</id>
    </interactant>
    <interactant intactId="EBI-742909">
        <id>Q9H6L4</id>
        <label>ARMC7</label>
    </interactant>
    <organismsDiffer>false</organismsDiffer>
    <experiments>3</experiments>
</comment>
<comment type="interaction">
    <interactant intactId="EBI-2130429">
        <id>Q9BYV2</id>
    </interactant>
    <interactant intactId="EBI-358049">
        <id>Q13895</id>
        <label>BYSL</label>
    </interactant>
    <organismsDiffer>false</organismsDiffer>
    <experiments>7</experiments>
</comment>
<comment type="interaction">
    <interactant intactId="EBI-2130429">
        <id>Q9BYV2</id>
    </interactant>
    <interactant intactId="EBI-747505">
        <id>Q8TAB5</id>
        <label>C1orf216</label>
    </interactant>
    <organismsDiffer>false</organismsDiffer>
    <experiments>3</experiments>
</comment>
<comment type="interaction">
    <interactant intactId="EBI-2130429">
        <id>Q9BYV2</id>
    </interactant>
    <interactant intactId="EBI-2817707">
        <id>Q9BXJ5</id>
        <label>C1QTNF2</label>
    </interactant>
    <organismsDiffer>false</organismsDiffer>
    <experiments>3</experiments>
</comment>
<comment type="interaction">
    <interactant intactId="EBI-2130429">
        <id>Q9BYV2</id>
    </interactant>
    <interactant intactId="EBI-739879">
        <id>Q53TS8</id>
        <label>C2CD6</label>
    </interactant>
    <organismsDiffer>false</organismsDiffer>
    <experiments>3</experiments>
</comment>
<comment type="interaction">
    <interactant intactId="EBI-2130429">
        <id>Q9BYV2</id>
    </interactant>
    <interactant intactId="EBI-751319">
        <id>Q9H257</id>
        <label>CARD9</label>
    </interactant>
    <organismsDiffer>false</organismsDiffer>
    <experiments>3</experiments>
</comment>
<comment type="interaction">
    <interactant intactId="EBI-2130429">
        <id>Q9BYV2</id>
    </interactant>
    <interactant intactId="EBI-712912">
        <id>Q9HC52</id>
        <label>CBX8</label>
    </interactant>
    <organismsDiffer>false</organismsDiffer>
    <experiments>3</experiments>
</comment>
<comment type="interaction">
    <interactant intactId="EBI-2130429">
        <id>Q9BYV2</id>
    </interactant>
    <interactant intactId="EBI-10171570">
        <id>Q68D86</id>
        <label>CCDC102B</label>
    </interactant>
    <organismsDiffer>false</organismsDiffer>
    <experiments>6</experiments>
</comment>
<comment type="interaction">
    <interactant intactId="EBI-2130429">
        <id>Q9BYV2</id>
    </interactant>
    <interactant intactId="EBI-10749669">
        <id>Q8IYE0</id>
        <label>CCDC146</label>
    </interactant>
    <organismsDiffer>false</organismsDiffer>
    <experiments>3</experiments>
</comment>
<comment type="interaction">
    <interactant intactId="EBI-2130429">
        <id>Q9BYV2</id>
    </interactant>
    <interactant intactId="EBI-10247802">
        <id>Q8IYE0-2</id>
        <label>CCDC146</label>
    </interactant>
    <organismsDiffer>false</organismsDiffer>
    <experiments>3</experiments>
</comment>
<comment type="interaction">
    <interactant intactId="EBI-2130429">
        <id>Q9BYV2</id>
    </interactant>
    <interactant intactId="EBI-10258115">
        <id>Q7Z6N9</id>
        <label>CCDC28A</label>
    </interactant>
    <organismsDiffer>false</organismsDiffer>
    <experiments>3</experiments>
</comment>
<comment type="interaction">
    <interactant intactId="EBI-2130429">
        <id>Q9BYV2</id>
    </interactant>
    <interactant intactId="EBI-355471">
        <id>Q8IWP9</id>
        <label>CCDC28A</label>
    </interactant>
    <organismsDiffer>false</organismsDiffer>
    <experiments>3</experiments>
</comment>
<comment type="interaction">
    <interactant intactId="EBI-2130429">
        <id>Q9BYV2</id>
    </interactant>
    <interactant intactId="EBI-749261">
        <id>Q9NVE4</id>
        <label>CCDC87</label>
    </interactant>
    <organismsDiffer>false</organismsDiffer>
    <experiments>3</experiments>
</comment>
<comment type="interaction">
    <interactant intactId="EBI-2130429">
        <id>Q9BYV2</id>
    </interactant>
    <interactant intactId="EBI-10175300">
        <id>Q8TD31-3</id>
        <label>CCHCR1</label>
    </interactant>
    <organismsDiffer>false</organismsDiffer>
    <experiments>3</experiments>
</comment>
<comment type="interaction">
    <interactant intactId="EBI-2130429">
        <id>Q9BYV2</id>
    </interactant>
    <interactant intactId="EBI-295634">
        <id>Q16543</id>
        <label>CDC37</label>
    </interactant>
    <organismsDiffer>false</organismsDiffer>
    <experiments>3</experiments>
</comment>
<comment type="interaction">
    <interactant intactId="EBI-2130429">
        <id>Q9BYV2</id>
    </interactant>
    <interactant intactId="EBI-746238">
        <id>Q07002</id>
        <label>CDK18</label>
    </interactant>
    <organismsDiffer>false</organismsDiffer>
    <experiments>3</experiments>
</comment>
<comment type="interaction">
    <interactant intactId="EBI-2130429">
        <id>Q9BYV2</id>
    </interactant>
    <interactant intactId="EBI-375077">
        <id>P38936</id>
        <label>CDKN1A</label>
    </interactant>
    <organismsDiffer>false</organismsDiffer>
    <experiments>6</experiments>
</comment>
<comment type="interaction">
    <interactant intactId="EBI-2130429">
        <id>Q9BYV2</id>
    </interactant>
    <interactant intactId="EBI-5529694">
        <id>A8MT69</id>
        <label>CENPX</label>
    </interactant>
    <organismsDiffer>false</organismsDiffer>
    <experiments>3</experiments>
</comment>
<comment type="interaction">
    <interactant intactId="EBI-2130429">
        <id>Q9BYV2</id>
    </interactant>
    <interactant intactId="EBI-13128870">
        <id>A8MT69-2</id>
        <label>CENPX</label>
    </interactant>
    <organismsDiffer>false</organismsDiffer>
    <experiments>3</experiments>
</comment>
<comment type="interaction">
    <interactant intactId="EBI-2130429">
        <id>Q9BYV2</id>
    </interactant>
    <interactant intactId="EBI-10181988">
        <id>Q8IYX8-2</id>
        <label>CEP57L1</label>
    </interactant>
    <organismsDiffer>false</organismsDiffer>
    <experiments>3</experiments>
</comment>
<comment type="interaction">
    <interactant intactId="EBI-2130429">
        <id>Q9BYV2</id>
    </interactant>
    <interactant intactId="EBI-749051">
        <id>Q8IYR0</id>
        <label>CFAP206</label>
    </interactant>
    <organismsDiffer>false</organismsDiffer>
    <experiments>3</experiments>
</comment>
<comment type="interaction">
    <interactant intactId="EBI-2130429">
        <id>Q9BYV2</id>
    </interactant>
    <interactant intactId="EBI-742422">
        <id>Q96M91</id>
        <label>CFAP53</label>
    </interactant>
    <organismsDiffer>false</organismsDiffer>
    <experiments>3</experiments>
</comment>
<comment type="interaction">
    <interactant intactId="EBI-2130429">
        <id>Q9BYV2</id>
    </interactant>
    <interactant intactId="EBI-2321769">
        <id>Q9Y6H1</id>
        <label>CHCHD2</label>
    </interactant>
    <organismsDiffer>false</organismsDiffer>
    <experiments>3</experiments>
</comment>
<comment type="interaction">
    <interactant intactId="EBI-2130429">
        <id>Q9BYV2</id>
    </interactant>
    <interactant intactId="EBI-11985957">
        <id>O14647-3</id>
        <label>CHD2</label>
    </interactant>
    <organismsDiffer>false</organismsDiffer>
    <experiments>3</experiments>
</comment>
<comment type="interaction">
    <interactant intactId="EBI-2130429">
        <id>Q9BYV2</id>
    </interactant>
    <interactant intactId="EBI-12149877">
        <id>Q8IY22-3</id>
        <label>CMIP</label>
    </interactant>
    <organismsDiffer>false</organismsDiffer>
    <experiments>3</experiments>
</comment>
<comment type="interaction">
    <interactant intactId="EBI-2130429">
        <id>Q9BYV2</id>
    </interactant>
    <interactant intactId="EBI-520375">
        <id>P78560</id>
        <label>CRADD</label>
    </interactant>
    <organismsDiffer>false</organismsDiffer>
    <experiments>3</experiments>
</comment>
<comment type="interaction">
    <interactant intactId="EBI-2130429">
        <id>Q9BYV2</id>
    </interactant>
    <interactant intactId="EBI-348169">
        <id>P67870</id>
        <label>CSNK2B</label>
    </interactant>
    <organismsDiffer>false</organismsDiffer>
    <experiments>3</experiments>
</comment>
<comment type="interaction">
    <interactant intactId="EBI-2130429">
        <id>Q9BYV2</id>
    </interactant>
    <interactant intactId="EBI-11962928">
        <id>Q9UI47-2</id>
        <label>CTNNA3</label>
    </interactant>
    <organismsDiffer>false</organismsDiffer>
    <experiments>3</experiments>
</comment>
<comment type="interaction">
    <interactant intactId="EBI-2130429">
        <id>Q9BYV2</id>
    </interactant>
    <interactant intactId="EBI-5453285">
        <id>Q2TBE0</id>
        <label>CWF19L2</label>
    </interactant>
    <organismsDiffer>false</organismsDiffer>
    <experiments>6</experiments>
</comment>
<comment type="interaction">
    <interactant intactId="EBI-2130429">
        <id>Q9BYV2</id>
    </interactant>
    <interactant intactId="EBI-10277443">
        <id>Q8WWE8</id>
        <label>CYTH4</label>
    </interactant>
    <organismsDiffer>false</organismsDiffer>
    <experiments>3</experiments>
</comment>
<comment type="interaction">
    <interactant intactId="EBI-2130429">
        <id>Q9BYV2</id>
    </interactant>
    <interactant intactId="EBI-740686">
        <id>Q5TAQ9</id>
        <label>DCAF8</label>
    </interactant>
    <organismsDiffer>false</organismsDiffer>
    <experiments>2</experiments>
</comment>
<comment type="interaction">
    <interactant intactId="EBI-2130429">
        <id>Q9BYV2</id>
    </interactant>
    <interactant intactId="EBI-740086">
        <id>Q96GG9</id>
        <label>DCUN1D1</label>
    </interactant>
    <organismsDiffer>false</organismsDiffer>
    <experiments>3</experiments>
</comment>
<comment type="interaction">
    <interactant intactId="EBI-2130429">
        <id>Q9BYV2</id>
    </interactant>
    <interactant intactId="EBI-351257">
        <id>P26196</id>
        <label>DDX6</label>
    </interactant>
    <organismsDiffer>false</organismsDiffer>
    <experiments>3</experiments>
</comment>
<comment type="interaction">
    <interactant intactId="EBI-2130429">
        <id>Q9BYV2</id>
    </interactant>
    <interactant intactId="EBI-748597">
        <id>Q05D60</id>
        <label>DEUP1</label>
    </interactant>
    <organismsDiffer>false</organismsDiffer>
    <experiments>6</experiments>
</comment>
<comment type="interaction">
    <interactant intactId="EBI-2130429">
        <id>Q9BYV2</id>
    </interactant>
    <interactant intactId="EBI-742362">
        <id>O96015</id>
        <label>DNAL4</label>
    </interactant>
    <organismsDiffer>false</organismsDiffer>
    <experiments>3</experiments>
</comment>
<comment type="interaction">
    <interactant intactId="EBI-2130429">
        <id>Q9BYV2</id>
    </interactant>
    <interactant intactId="EBI-11984733">
        <id>O60941-5</id>
        <label>DTNB</label>
    </interactant>
    <organismsDiffer>false</organismsDiffer>
    <experiments>3</experiments>
</comment>
<comment type="interaction">
    <interactant intactId="EBI-2130429">
        <id>Q9BYV2</id>
    </interactant>
    <interactant intactId="EBI-740376">
        <id>Q86UW9</id>
        <label>DTX2</label>
    </interactant>
    <organismsDiffer>false</organismsDiffer>
    <experiments>9</experiments>
</comment>
<comment type="interaction">
    <interactant intactId="EBI-2130429">
        <id>Q9BYV2</id>
    </interactant>
    <interactant intactId="EBI-2556091">
        <id>Q96EX3</id>
        <label>DYNC2I2</label>
    </interactant>
    <organismsDiffer>false</organismsDiffer>
    <experiments>3</experiments>
</comment>
<comment type="interaction">
    <interactant intactId="EBI-2130429">
        <id>Q9BYV2</id>
    </interactant>
    <interactant intactId="EBI-2339219">
        <id>Q08426</id>
        <label>EHHADH</label>
    </interactant>
    <organismsDiffer>false</organismsDiffer>
    <experiments>3</experiments>
</comment>
<comment type="interaction">
    <interactant intactId="EBI-2130429">
        <id>Q9BYV2</id>
    </interactant>
    <interactant intactId="EBI-398610">
        <id>O60573</id>
        <label>EIF4E2</label>
    </interactant>
    <organismsDiffer>false</organismsDiffer>
    <experiments>3</experiments>
</comment>
<comment type="interaction">
    <interactant intactId="EBI-2130429">
        <id>Q9BYV2</id>
    </interactant>
    <interactant intactId="EBI-346417">
        <id>Q92556</id>
        <label>ELMO1</label>
    </interactant>
    <organismsDiffer>false</organismsDiffer>
    <experiments>3</experiments>
</comment>
<comment type="interaction">
    <interactant intactId="EBI-2130429">
        <id>Q9BYV2</id>
    </interactant>
    <interactant intactId="EBI-742350">
        <id>Q14241</id>
        <label>ELOA</label>
    </interactant>
    <organismsDiffer>false</organismsDiffer>
    <experiments>3</experiments>
</comment>
<comment type="interaction">
    <interactant intactId="EBI-2130429">
        <id>Q9BYV2</id>
    </interactant>
    <interactant intactId="EBI-744099">
        <id>Q9H0I2</id>
        <label>ENKD1</label>
    </interactant>
    <organismsDiffer>false</organismsDiffer>
    <experiments>6</experiments>
</comment>
<comment type="interaction">
    <interactant intactId="EBI-2130429">
        <id>Q9BYV2</id>
    </interactant>
    <interactant intactId="EBI-6255981">
        <id>Q7L775</id>
        <label>EPM2AIP1</label>
    </interactant>
    <organismsDiffer>false</organismsDiffer>
    <experiments>6</experiments>
</comment>
<comment type="interaction">
    <interactant intactId="EBI-2130429">
        <id>Q9BYV2</id>
    </interactant>
    <interactant intactId="EBI-6251402">
        <id>Q9UPT5-1</id>
        <label>EXOC7</label>
    </interactant>
    <organismsDiffer>false</organismsDiffer>
    <experiments>3</experiments>
</comment>
<comment type="interaction">
    <interactant intactId="EBI-2130429">
        <id>Q9BYV2</id>
    </interactant>
    <interactant intactId="EBI-742102">
        <id>Q8IYI6</id>
        <label>EXOC8</label>
    </interactant>
    <organismsDiffer>false</organismsDiffer>
    <experiments>3</experiments>
</comment>
<comment type="interaction">
    <interactant intactId="EBI-2130429">
        <id>Q9BYV2</id>
    </interactant>
    <interactant intactId="EBI-371876">
        <id>Q9NQT4</id>
        <label>EXOSC5</label>
    </interactant>
    <organismsDiffer>false</organismsDiffer>
    <experiments>6</experiments>
</comment>
<comment type="interaction">
    <interactant intactId="EBI-2130429">
        <id>Q9BYV2</id>
    </interactant>
    <interactant intactId="EBI-1752811">
        <id>Q9BQ89</id>
        <label>FAM110A</label>
    </interactant>
    <organismsDiffer>false</organismsDiffer>
    <experiments>6</experiments>
</comment>
<comment type="interaction">
    <interactant intactId="EBI-2130429">
        <id>Q9BYV2</id>
    </interactant>
    <interactant intactId="EBI-744506">
        <id>Q86V42</id>
        <label>FAM124A</label>
    </interactant>
    <organismsDiffer>false</organismsDiffer>
    <experiments>3</experiments>
</comment>
<comment type="interaction">
    <interactant intactId="EBI-2130429">
        <id>Q9BYV2</id>
    </interactant>
    <interactant intactId="EBI-741626">
        <id>Q9H5Z6</id>
        <label>FAM124B</label>
    </interactant>
    <organismsDiffer>false</organismsDiffer>
    <experiments>3</experiments>
</comment>
<comment type="interaction">
    <interactant intactId="EBI-2130429">
        <id>Q9BYV2</id>
    </interactant>
    <interactant intactId="EBI-719941">
        <id>Q3B820</id>
        <label>FAM161A</label>
    </interactant>
    <organismsDiffer>false</organismsDiffer>
    <experiments>6</experiments>
</comment>
<comment type="interaction">
    <interactant intactId="EBI-2130429">
        <id>Q9BYV2</id>
    </interactant>
    <interactant intactId="EBI-742802">
        <id>Q9Y247</id>
        <label>FAM50B</label>
    </interactant>
    <organismsDiffer>false</organismsDiffer>
    <experiments>3</experiments>
</comment>
<comment type="interaction">
    <interactant intactId="EBI-2130429">
        <id>Q9BYV2</id>
    </interactant>
    <interactant intactId="EBI-6658203">
        <id>Q86YD7</id>
        <label>FAM90A1</label>
    </interactant>
    <organismsDiffer>false</organismsDiffer>
    <experiments>3</experiments>
</comment>
<comment type="interaction">
    <interactant intactId="EBI-2130429">
        <id>Q9BYV2</id>
    </interactant>
    <interactant intactId="EBI-2513774">
        <id>O95363</id>
        <label>FARS2</label>
    </interactant>
    <organismsDiffer>false</organismsDiffer>
    <experiments>3</experiments>
</comment>
<comment type="interaction">
    <interactant intactId="EBI-2130429">
        <id>Q9BYV2</id>
    </interactant>
    <interactant intactId="EBI-10244131">
        <id>Q8TES7-6</id>
        <label>FBF1</label>
    </interactant>
    <organismsDiffer>false</organismsDiffer>
    <experiments>3</experiments>
</comment>
<comment type="interaction">
    <interactant intactId="EBI-2130429">
        <id>Q9BYV2</id>
    </interactant>
    <interactant intactId="EBI-12063229">
        <id>Q8IX29</id>
        <label>FBXO16</label>
    </interactant>
    <organismsDiffer>false</organismsDiffer>
    <experiments>3</experiments>
</comment>
<comment type="interaction">
    <interactant intactId="EBI-2130429">
        <id>Q9BYV2</id>
    </interactant>
    <interactant intactId="EBI-914727">
        <id>Q9UKT8</id>
        <label>FBXW2</label>
    </interactant>
    <organismsDiffer>false</organismsDiffer>
    <experiments>2</experiments>
</comment>
<comment type="interaction">
    <interactant intactId="EBI-2130429">
        <id>Q9BYV2</id>
    </interactant>
    <interactant intactId="EBI-10172181">
        <id>Q53SE7</id>
        <label>FLJ13057</label>
    </interactant>
    <organismsDiffer>false</organismsDiffer>
    <experiments>3</experiments>
</comment>
<comment type="interaction">
    <interactant intactId="EBI-2130429">
        <id>Q9BYV2</id>
    </interactant>
    <interactant intactId="EBI-1052570">
        <id>O95995</id>
        <label>GAS8</label>
    </interactant>
    <organismsDiffer>false</organismsDiffer>
    <experiments>3</experiments>
</comment>
<comment type="interaction">
    <interactant intactId="EBI-2130429">
        <id>Q9BYV2</id>
    </interactant>
    <interactant intactId="EBI-744104">
        <id>P55040</id>
        <label>GEM</label>
    </interactant>
    <organismsDiffer>false</organismsDiffer>
    <experiments>3</experiments>
</comment>
<comment type="interaction">
    <interactant intactId="EBI-2130429">
        <id>Q9BYV2</id>
    </interactant>
    <interactant intactId="EBI-11427343">
        <id>Q9P2W3</id>
        <label>GNG13</label>
    </interactant>
    <organismsDiffer>false</organismsDiffer>
    <experiments>3</experiments>
</comment>
<comment type="interaction">
    <interactant intactId="EBI-2130429">
        <id>Q9BYV2</id>
    </interactant>
    <interactant intactId="EBI-746682">
        <id>Q9NVN8</id>
        <label>GNL3L</label>
    </interactant>
    <organismsDiffer>false</organismsDiffer>
    <experiments>3</experiments>
</comment>
<comment type="interaction">
    <interactant intactId="EBI-2130429">
        <id>Q9BYV2</id>
    </interactant>
    <interactant intactId="EBI-12033200">
        <id>P78347-2</id>
        <label>GTF2I</label>
    </interactant>
    <organismsDiffer>false</organismsDiffer>
    <experiments>3</experiments>
</comment>
<comment type="interaction">
    <interactant intactId="EBI-2130429">
        <id>Q9BYV2</id>
    </interactant>
    <interactant intactId="EBI-6425928">
        <id>Q86UP8</id>
        <label>GTF2IRD2</label>
    </interactant>
    <organismsDiffer>false</organismsDiffer>
    <experiments>3</experiments>
</comment>
<comment type="interaction">
    <interactant intactId="EBI-2130429">
        <id>Q9BYV2</id>
    </interactant>
    <interactant intactId="EBI-12338155">
        <id>Q6EKJ0</id>
        <label>GTF2IRD2B</label>
    </interactant>
    <organismsDiffer>false</organismsDiffer>
    <experiments>3</experiments>
</comment>
<comment type="interaction">
    <interactant intactId="EBI-2130429">
        <id>Q9BYV2</id>
    </interactant>
    <interactant intactId="EBI-2514791">
        <id>Q96CS2</id>
        <label>HAUS1</label>
    </interactant>
    <organismsDiffer>false</organismsDiffer>
    <experiments>3</experiments>
</comment>
<comment type="interaction">
    <interactant intactId="EBI-2130429">
        <id>Q9BYV2</id>
    </interactant>
    <interactant intactId="EBI-301762">
        <id>Q969S8</id>
        <label>HDAC10</label>
    </interactant>
    <organismsDiffer>false</organismsDiffer>
    <experiments>2</experiments>
</comment>
<comment type="interaction">
    <interactant intactId="EBI-2130429">
        <id>Q9BYV2</id>
    </interactant>
    <interactant intactId="EBI-740220">
        <id>O14964</id>
        <label>HGS</label>
    </interactant>
    <organismsDiffer>false</organismsDiffer>
    <experiments>3</experiments>
</comment>
<comment type="interaction">
    <interactant intactId="EBI-2130429">
        <id>Q9BYV2</id>
    </interactant>
    <interactant intactId="EBI-3893317">
        <id>P09067</id>
        <label>HOXB5</label>
    </interactant>
    <organismsDiffer>false</organismsDiffer>
    <experiments>3</experiments>
</comment>
<comment type="interaction">
    <interactant intactId="EBI-2130429">
        <id>Q9BYV2</id>
    </interactant>
    <interactant intactId="EBI-10263367">
        <id>A0A0C4DG38</id>
        <label>ING3</label>
    </interactant>
    <organismsDiffer>false</organismsDiffer>
    <experiments>3</experiments>
</comment>
<comment type="interaction">
    <interactant intactId="EBI-2130429">
        <id>Q9BYV2</id>
    </interactant>
    <interactant intactId="EBI-10236940">
        <id>Q15735</id>
        <label>INPP5J</label>
    </interactant>
    <organismsDiffer>false</organismsDiffer>
    <experiments>6</experiments>
</comment>
<comment type="interaction">
    <interactant intactId="EBI-2130429">
        <id>Q9BYV2</id>
    </interactant>
    <interactant intactId="EBI-10220600">
        <id>Q8NA54</id>
        <label>IQUB</label>
    </interactant>
    <organismsDiffer>false</organismsDiffer>
    <experiments>4</experiments>
</comment>
<comment type="interaction">
    <interactant intactId="EBI-2130429">
        <id>Q9BYV2</id>
    </interactant>
    <interactant intactId="EBI-751388">
        <id>P27987</id>
        <label>ITPKB</label>
    </interactant>
    <organismsDiffer>false</organismsDiffer>
    <experiments>3</experiments>
</comment>
<comment type="interaction">
    <interactant intactId="EBI-2130429">
        <id>Q9BYV2</id>
    </interactant>
    <interactant intactId="EBI-2556193">
        <id>Q63ZY3</id>
        <label>KANK2</label>
    </interactant>
    <organismsDiffer>false</organismsDiffer>
    <experiments>3</experiments>
</comment>
<comment type="interaction">
    <interactant intactId="EBI-2130429">
        <id>Q9BYV2</id>
    </interactant>
    <interactant intactId="EBI-750907">
        <id>Q9H8E8</id>
        <label>KAT14</label>
    </interactant>
    <organismsDiffer>false</organismsDiffer>
    <experiments>3</experiments>
</comment>
<comment type="interaction">
    <interactant intactId="EBI-2130429">
        <id>Q9BYV2</id>
    </interactant>
    <interactant intactId="EBI-8472129">
        <id>Q9HAQ2</id>
        <label>KIF9</label>
    </interactant>
    <organismsDiffer>false</organismsDiffer>
    <experiments>3</experiments>
</comment>
<comment type="interaction">
    <interactant intactId="EBI-2130429">
        <id>Q9BYV2</id>
    </interactant>
    <interactant intactId="EBI-2125614">
        <id>Q9BVG8</id>
        <label>KIFC3</label>
    </interactant>
    <organismsDiffer>false</organismsDiffer>
    <experiments>3</experiments>
</comment>
<comment type="interaction">
    <interactant intactId="EBI-2130429">
        <id>Q9BYV2</id>
    </interactant>
    <interactant intactId="EBI-14069005">
        <id>Q9BVG8-5</id>
        <label>KIFC3</label>
    </interactant>
    <organismsDiffer>false</organismsDiffer>
    <experiments>3</experiments>
</comment>
<comment type="interaction">
    <interactant intactId="EBI-2130429">
        <id>Q9BYV2</id>
    </interactant>
    <interactant intactId="EBI-6426443">
        <id>Q2WGJ6</id>
        <label>KLHL38</label>
    </interactant>
    <organismsDiffer>false</organismsDiffer>
    <experiments>6</experiments>
</comment>
<comment type="interaction">
    <interactant intactId="EBI-2130429">
        <id>Q9BYV2</id>
    </interactant>
    <interactant intactId="EBI-739890">
        <id>Q9P2K6</id>
        <label>KLHL42</label>
    </interactant>
    <organismsDiffer>false</organismsDiffer>
    <experiments>3</experiments>
</comment>
<comment type="interaction">
    <interactant intactId="EBI-2130429">
        <id>Q9BYV2</id>
    </interactant>
    <interactant intactId="EBI-349938">
        <id>P52292</id>
        <label>KPNA2</label>
    </interactant>
    <organismsDiffer>false</organismsDiffer>
    <experiments>3</experiments>
</comment>
<comment type="interaction">
    <interactant intactId="EBI-2130429">
        <id>Q9BYV2</id>
    </interactant>
    <interactant intactId="EBI-298429">
        <id>P04264</id>
        <label>KRT1</label>
    </interactant>
    <organismsDiffer>false</organismsDiffer>
    <experiments>3</experiments>
</comment>
<comment type="interaction">
    <interactant intactId="EBI-2130429">
        <id>Q9BYV2</id>
    </interactant>
    <interactant intactId="EBI-2430095">
        <id>P12035</id>
        <label>KRT3</label>
    </interactant>
    <organismsDiffer>false</organismsDiffer>
    <experiments>3</experiments>
</comment>
<comment type="interaction">
    <interactant intactId="EBI-2130429">
        <id>Q9BYV2</id>
    </interactant>
    <interactant intactId="EBI-2371606">
        <id>P19013</id>
        <label>KRT4</label>
    </interactant>
    <organismsDiffer>false</organismsDiffer>
    <experiments>4</experiments>
</comment>
<comment type="interaction">
    <interactant intactId="EBI-2130429">
        <id>Q9BYV2</id>
    </interactant>
    <interactant intactId="EBI-702198">
        <id>P02538</id>
        <label>KRT6A</label>
    </interactant>
    <organismsDiffer>false</organismsDiffer>
    <experiments>11</experiments>
</comment>
<comment type="interaction">
    <interactant intactId="EBI-2130429">
        <id>Q9BYV2</id>
    </interactant>
    <interactant intactId="EBI-740907">
        <id>P04259</id>
        <label>KRT6B</label>
    </interactant>
    <organismsDiffer>false</organismsDiffer>
    <experiments>6</experiments>
</comment>
<comment type="interaction">
    <interactant intactId="EBI-2130429">
        <id>Q9BYV2</id>
    </interactant>
    <interactant intactId="EBI-2564105">
        <id>P48668</id>
        <label>KRT6C</label>
    </interactant>
    <organismsDiffer>false</organismsDiffer>
    <experiments>6</experiments>
</comment>
<comment type="interaction">
    <interactant intactId="EBI-2130429">
        <id>Q9BYV2</id>
    </interactant>
    <interactant intactId="EBI-2949715">
        <id>O95678</id>
        <label>KRT75</label>
    </interactant>
    <organismsDiffer>false</organismsDiffer>
    <experiments>3</experiments>
</comment>
<comment type="interaction">
    <interactant intactId="EBI-2130429">
        <id>Q9BYV2</id>
    </interactant>
    <interactant intactId="EBI-2952745">
        <id>Q01546</id>
        <label>KRT76</label>
    </interactant>
    <organismsDiffer>false</organismsDiffer>
    <experiments>3</experiments>
</comment>
<comment type="interaction">
    <interactant intactId="EBI-2130429">
        <id>Q9BYV2</id>
    </interactant>
    <interactant intactId="EBI-1056564">
        <id>Q8N1N4</id>
        <label>KRT78</label>
    </interactant>
    <organismsDiffer>false</organismsDiffer>
    <experiments>3</experiments>
</comment>
<comment type="interaction">
    <interactant intactId="EBI-2130429">
        <id>Q9BYV2</id>
    </interactant>
    <interactant intactId="EBI-2514135">
        <id>Q5XKE5</id>
        <label>KRT79</label>
    </interactant>
    <organismsDiffer>false</organismsDiffer>
    <experiments>3</experiments>
</comment>
<comment type="interaction">
    <interactant intactId="EBI-2130429">
        <id>Q9BYV2</id>
    </interactant>
    <interactant intactId="EBI-726510">
        <id>Q96BZ8</id>
        <label>LENG1</label>
    </interactant>
    <organismsDiffer>false</organismsDiffer>
    <experiments>6</experiments>
</comment>
<comment type="interaction">
    <interactant intactId="EBI-2130429">
        <id>Q9BYV2</id>
    </interactant>
    <interactant intactId="EBI-748884">
        <id>Q96GY3</id>
        <label>LIN37</label>
    </interactant>
    <organismsDiffer>false</organismsDiffer>
    <experiments>3</experiments>
</comment>
<comment type="interaction">
    <interactant intactId="EBI-2130429">
        <id>Q9BYV2</id>
    </interactant>
    <interactant intactId="EBI-8639312">
        <id>P25800</id>
        <label>LMO1</label>
    </interactant>
    <organismsDiffer>false</organismsDiffer>
    <experiments>3</experiments>
</comment>
<comment type="interaction">
    <interactant intactId="EBI-2130429">
        <id>Q9BYV2</id>
    </interactant>
    <interactant intactId="EBI-739696">
        <id>P25791</id>
        <label>LMO2</label>
    </interactant>
    <organismsDiffer>false</organismsDiffer>
    <experiments>3</experiments>
</comment>
<comment type="interaction">
    <interactant intactId="EBI-2130429">
        <id>Q9BYV2</id>
    </interactant>
    <interactant intactId="EBI-11742507">
        <id>Q8TAP4-4</id>
        <label>LMO3</label>
    </interactant>
    <organismsDiffer>false</organismsDiffer>
    <experiments>3</experiments>
</comment>
<comment type="interaction">
    <interactant intactId="EBI-2130429">
        <id>Q9BYV2</id>
    </interactant>
    <interactant intactId="EBI-2798728">
        <id>P61968</id>
        <label>LMO4</label>
    </interactant>
    <organismsDiffer>false</organismsDiffer>
    <experiments>3</experiments>
</comment>
<comment type="interaction">
    <interactant intactId="EBI-2130429">
        <id>Q9BYV2</id>
    </interactant>
    <interactant intactId="EBI-739832">
        <id>Q8TBB1</id>
        <label>LNX1</label>
    </interactant>
    <organismsDiffer>false</organismsDiffer>
    <experiments>7</experiments>
</comment>
<comment type="interaction">
    <interactant intactId="EBI-2130429">
        <id>Q9BYV2</id>
    </interactant>
    <interactant intactId="EBI-347416">
        <id>Q9Y333</id>
        <label>LSM2</label>
    </interactant>
    <organismsDiffer>false</organismsDiffer>
    <experiments>3</experiments>
</comment>
<comment type="interaction">
    <interactant intactId="EBI-2130429">
        <id>Q9BYV2</id>
    </interactant>
    <interactant intactId="EBI-77889">
        <id>Q9UI95</id>
        <label>MAD2L2</label>
    </interactant>
    <organismsDiffer>false</organismsDiffer>
    <experiments>3</experiments>
</comment>
<comment type="interaction">
    <interactant intactId="EBI-2130429">
        <id>Q9BYV2</id>
    </interactant>
    <interactant intactId="EBI-1783068">
        <id>O95983</id>
        <label>MBD3</label>
    </interactant>
    <organismsDiffer>false</organismsDiffer>
    <experiments>3</experiments>
</comment>
<comment type="interaction">
    <interactant intactId="EBI-2130429">
        <id>Q9BYV2</id>
    </interactant>
    <interactant intactId="EBI-11978579">
        <id>O95983-2</id>
        <label>MBD3</label>
    </interactant>
    <organismsDiffer>false</organismsDiffer>
    <experiments>3</experiments>
</comment>
<comment type="interaction">
    <interactant intactId="EBI-2130429">
        <id>Q9BYV2</id>
    </interactant>
    <interactant intactId="EBI-355924">
        <id>P33993</id>
        <label>MCM7</label>
    </interactant>
    <organismsDiffer>false</organismsDiffer>
    <experiments>3</experiments>
</comment>
<comment type="interaction">
    <interactant intactId="EBI-2130429">
        <id>Q9BYV2</id>
    </interactant>
    <interactant intactId="EBI-399266">
        <id>Q9HAF1</id>
        <label>MEAF6</label>
    </interactant>
    <organismsDiffer>false</organismsDiffer>
    <experiments>3</experiments>
</comment>
<comment type="interaction">
    <interactant intactId="EBI-2130429">
        <id>Q9BYV2</id>
    </interactant>
    <interactant intactId="EBI-1048159">
        <id>P55081</id>
        <label>MFAP1</label>
    </interactant>
    <organismsDiffer>false</organismsDiffer>
    <experiments>6</experiments>
</comment>
<comment type="interaction">
    <interactant intactId="EBI-2130429">
        <id>Q9BYV2</id>
    </interactant>
    <interactant intactId="EBI-10172526">
        <id>Q9UJV3-2</id>
        <label>MID2</label>
    </interactant>
    <organismsDiffer>false</organismsDiffer>
    <experiments>6</experiments>
</comment>
<comment type="interaction">
    <interactant intactId="EBI-2130429">
        <id>Q9BYV2</id>
    </interactant>
    <interactant intactId="EBI-742459">
        <id>Q9BU76</id>
        <label>MMTAG2</label>
    </interactant>
    <organismsDiffer>false</organismsDiffer>
    <experiments>3</experiments>
</comment>
<comment type="interaction">
    <interactant intactId="EBI-2130429">
        <id>Q9BYV2</id>
    </interactant>
    <interactant intactId="EBI-743811">
        <id>Q8NEH6</id>
        <label>MNS1</label>
    </interactant>
    <organismsDiffer>false</organismsDiffer>
    <experiments>3</experiments>
</comment>
<comment type="interaction">
    <interactant intactId="EBI-2130429">
        <id>Q9BYV2</id>
    </interactant>
    <interactant intactId="EBI-356910">
        <id>Q9H1R3</id>
        <label>MYLK2</label>
    </interactant>
    <organismsDiffer>false</organismsDiffer>
    <experiments>2</experiments>
</comment>
<comment type="interaction">
    <interactant intactId="EBI-2130429">
        <id>Q9BYV2</id>
    </interactant>
    <interactant intactId="EBI-7950783">
        <id>Q96JP2</id>
        <label>MYO15B</label>
    </interactant>
    <organismsDiffer>false</organismsDiffer>
    <experiments>3</experiments>
</comment>
<comment type="interaction">
    <interactant intactId="EBI-2130429">
        <id>Q9BYV2</id>
    </interactant>
    <interactant intactId="EBI-311356">
        <id>Q9ULV0</id>
        <label>MYO5B</label>
    </interactant>
    <organismsDiffer>false</organismsDiffer>
    <experiments>3</experiments>
</comment>
<comment type="interaction">
    <interactant intactId="EBI-2130429">
        <id>Q9BYV2</id>
    </interactant>
    <interactant intactId="EBI-14093244">
        <id>Q9ULV0-2</id>
        <label>MYO5B</label>
    </interactant>
    <organismsDiffer>false</organismsDiffer>
    <experiments>3</experiments>
</comment>
<comment type="interaction">
    <interactant intactId="EBI-2130429">
        <id>Q9BYV2</id>
    </interactant>
    <interactant intactId="EBI-11750983">
        <id>Q9HC98-4</id>
        <label>NEK6</label>
    </interactant>
    <organismsDiffer>false</organismsDiffer>
    <experiments>3</experiments>
</comment>
<comment type="interaction">
    <interactant intactId="EBI-2130429">
        <id>Q9BYV2</id>
    </interactant>
    <interactant intactId="EBI-6165879">
        <id>Q96IV0</id>
        <label>NGLY1</label>
    </interactant>
    <organismsDiffer>false</organismsDiffer>
    <experiments>7</experiments>
</comment>
<comment type="interaction">
    <interactant intactId="EBI-2130429">
        <id>Q9BYV2</id>
    </interactant>
    <interactant intactId="EBI-741158">
        <id>Q96HA8</id>
        <label>NTAQ1</label>
    </interactant>
    <organismsDiffer>false</organismsDiffer>
    <experiments>6</experiments>
</comment>
<comment type="interaction">
    <interactant intactId="EBI-2130429">
        <id>Q9BYV2</id>
    </interactant>
    <interactant intactId="EBI-9057006">
        <id>Q9UJX0</id>
        <label>OSGIN1</label>
    </interactant>
    <organismsDiffer>false</organismsDiffer>
    <experiments>3</experiments>
</comment>
<comment type="interaction">
    <interactant intactId="EBI-2130429">
        <id>Q9BYV2</id>
    </interactant>
    <interactant intactId="EBI-1051152">
        <id>Q92882</id>
        <label>OSTF1</label>
    </interactant>
    <organismsDiffer>false</organismsDiffer>
    <experiments>3</experiments>
</comment>
<comment type="interaction">
    <interactant intactId="EBI-2130429">
        <id>Q9BYV2</id>
    </interactant>
    <interactant intactId="EBI-746259">
        <id>Q96DC9</id>
        <label>OTUB2</label>
    </interactant>
    <organismsDiffer>false</organismsDiffer>
    <experiments>4</experiments>
</comment>
<comment type="interaction">
    <interactant intactId="EBI-2130429">
        <id>Q9BYV2</id>
    </interactant>
    <interactant intactId="EBI-3921217">
        <id>Q9HBI0</id>
        <label>PARVG</label>
    </interactant>
    <organismsDiffer>false</organismsDiffer>
    <experiments>3</experiments>
</comment>
<comment type="interaction">
    <interactant intactId="EBI-2130429">
        <id>Q9BYV2</id>
    </interactant>
    <interactant intactId="EBI-79165">
        <id>Q9NRD5</id>
        <label>PICK1</label>
    </interactant>
    <organismsDiffer>false</organismsDiffer>
    <experiments>3</experiments>
</comment>
<comment type="interaction">
    <interactant intactId="EBI-2130429">
        <id>Q9BYV2</id>
    </interactant>
    <interactant intactId="EBI-749096">
        <id>Q8N381</id>
        <label>PIK3R3</label>
    </interactant>
    <organismsDiffer>false</organismsDiffer>
    <experiments>3</experiments>
</comment>
<comment type="interaction">
    <interactant intactId="EBI-2130429">
        <id>Q9BYV2</id>
    </interactant>
    <interactant intactId="EBI-746202">
        <id>O00444</id>
        <label>PLK4</label>
    </interactant>
    <organismsDiffer>false</organismsDiffer>
    <experiments>3</experiments>
</comment>
<comment type="interaction">
    <interactant intactId="EBI-2130429">
        <id>Q9BYV2</id>
    </interactant>
    <interactant intactId="EBI-2557469">
        <id>Q6NYC8</id>
        <label>PPP1R18</label>
    </interactant>
    <organismsDiffer>false</organismsDiffer>
    <experiments>6</experiments>
</comment>
<comment type="interaction">
    <interactant intactId="EBI-2130429">
        <id>Q9BYV2</id>
    </interactant>
    <interactant intactId="EBI-1053424">
        <id>O43741</id>
        <label>PRKAB2</label>
    </interactant>
    <organismsDiffer>false</organismsDiffer>
    <experiments>3</experiments>
</comment>
<comment type="interaction">
    <interactant intactId="EBI-2130429">
        <id>Q9BYV2</id>
    </interactant>
    <interactant intactId="EBI-2798416">
        <id>Q99633</id>
        <label>PRPF18</label>
    </interactant>
    <organismsDiffer>false</organismsDiffer>
    <experiments>3</experiments>
</comment>
<comment type="interaction">
    <interactant intactId="EBI-2130429">
        <id>Q9BYV2</id>
    </interactant>
    <interactant intactId="EBI-11986293">
        <id>P0CG20</id>
        <label>PRR35</label>
    </interactant>
    <organismsDiffer>false</organismsDiffer>
    <experiments>3</experiments>
</comment>
<comment type="interaction">
    <interactant intactId="EBI-2130429">
        <id>Q9BYV2</id>
    </interactant>
    <interactant intactId="EBI-359352">
        <id>P25786</id>
        <label>PSMA1</label>
    </interactant>
    <organismsDiffer>false</organismsDiffer>
    <experiments>3</experiments>
</comment>
<comment type="interaction">
    <interactant intactId="EBI-2130429">
        <id>Q9BYV2</id>
    </interactant>
    <interactant intactId="EBI-913954">
        <id>Q9UJ41</id>
        <label>RABGEF1</label>
    </interactant>
    <organismsDiffer>false</organismsDiffer>
    <experiments>3</experiments>
</comment>
<comment type="interaction">
    <interactant intactId="EBI-2130429">
        <id>Q9BYV2</id>
    </interactant>
    <interactant intactId="EBI-14093916">
        <id>Q9UJ41-4</id>
        <label>RABGEF1</label>
    </interactant>
    <organismsDiffer>false</organismsDiffer>
    <experiments>3</experiments>
</comment>
<comment type="interaction">
    <interactant intactId="EBI-2130429">
        <id>Q9BYV2</id>
    </interactant>
    <interactant intactId="EBI-746453">
        <id>P54725</id>
        <label>RAD23A</label>
    </interactant>
    <organismsDiffer>false</organismsDiffer>
    <experiments>3</experiments>
</comment>
<comment type="interaction">
    <interactant intactId="EBI-2130429">
        <id>Q9BYV2</id>
    </interactant>
    <interactant intactId="EBI-6912267">
        <id>A6NK89</id>
        <label>RASSF10</label>
    </interactant>
    <organismsDiffer>false</organismsDiffer>
    <experiments>3</experiments>
</comment>
<comment type="interaction">
    <interactant intactId="EBI-2130429">
        <id>Q9BYV2</id>
    </interactant>
    <interactant intactId="EBI-740773">
        <id>Q96IZ5</id>
        <label>RBM41</label>
    </interactant>
    <organismsDiffer>false</organismsDiffer>
    <experiments>3</experiments>
</comment>
<comment type="interaction">
    <interactant intactId="EBI-2130429">
        <id>Q9BYV2</id>
    </interactant>
    <interactant intactId="EBI-743428">
        <id>Q9P2K3</id>
        <label>RCOR3</label>
    </interactant>
    <organismsDiffer>false</organismsDiffer>
    <experiments>3</experiments>
</comment>
<comment type="interaction">
    <interactant intactId="EBI-2130429">
        <id>Q9BYV2</id>
    </interactant>
    <interactant intactId="EBI-1504830">
        <id>Q9P2K3-2</id>
        <label>RCOR3</label>
    </interactant>
    <organismsDiffer>false</organismsDiffer>
    <experiments>3</experiments>
</comment>
<comment type="interaction">
    <interactant intactId="EBI-2130429">
        <id>Q9BYV2</id>
    </interactant>
    <interactant intactId="EBI-2340927">
        <id>P78317</id>
        <label>RNF4</label>
    </interactant>
    <organismsDiffer>false</organismsDiffer>
    <experiments>3</experiments>
</comment>
<comment type="interaction">
    <interactant intactId="EBI-2130429">
        <id>Q9BYV2</id>
    </interactant>
    <interactant intactId="EBI-10256202">
        <id>Q7L4I2-2</id>
        <label>RSRC2</label>
    </interactant>
    <organismsDiffer>false</organismsDiffer>
    <experiments>3</experiments>
</comment>
<comment type="interaction">
    <interactant intactId="EBI-2130429">
        <id>Q9BYV2</id>
    </interactant>
    <interactant intactId="EBI-11984663">
        <id>Q06455-2</id>
        <label>RUNX1T1</label>
    </interactant>
    <organismsDiffer>false</organismsDiffer>
    <experiments>3</experiments>
</comment>
<comment type="interaction">
    <interactant intactId="EBI-2130429">
        <id>Q9BYV2</id>
    </interactant>
    <interactant intactId="EBI-748391">
        <id>Q9BWG6</id>
        <label>SCNM1</label>
    </interactant>
    <organismsDiffer>false</organismsDiffer>
    <experiments>6</experiments>
</comment>
<comment type="interaction">
    <interactant intactId="EBI-2130429">
        <id>Q9BYV2</id>
    </interactant>
    <interactant intactId="EBI-727004">
        <id>O00560</id>
        <label>SDCBP</label>
    </interactant>
    <organismsDiffer>false</organismsDiffer>
    <experiments>6</experiments>
</comment>
<comment type="interaction">
    <interactant intactId="EBI-2130429">
        <id>Q9BYV2</id>
    </interactant>
    <interactant intactId="EBI-10320311">
        <id>Q9UDX3</id>
        <label>SEC14L4</label>
    </interactant>
    <organismsDiffer>false</organismsDiffer>
    <experiments>3</experiments>
</comment>
<comment type="interaction">
    <interactant intactId="EBI-2130429">
        <id>Q9BYV2</id>
    </interactant>
    <interactant intactId="EBI-3923013">
        <id>O14796</id>
        <label>SH2D1B</label>
    </interactant>
    <organismsDiffer>false</organismsDiffer>
    <experiments>6</experiments>
</comment>
<comment type="interaction">
    <interactant intactId="EBI-2130429">
        <id>Q9BYV2</id>
    </interactant>
    <interactant intactId="EBI-79084">
        <id>Q92529</id>
        <label>SHC3</label>
    </interactant>
    <organismsDiffer>false</organismsDiffer>
    <experiments>3</experiments>
</comment>
<comment type="interaction">
    <interactant intactId="EBI-2130429">
        <id>Q9BYV2</id>
    </interactant>
    <interactant intactId="EBI-358489">
        <id>Q96GM5</id>
        <label>SMARCD1</label>
    </interactant>
    <organismsDiffer>false</organismsDiffer>
    <experiments>3</experiments>
</comment>
<comment type="interaction">
    <interactant intactId="EBI-2130429">
        <id>Q9BYV2</id>
    </interactant>
    <interactant intactId="EBI-455078">
        <id>Q969G3</id>
        <label>SMARCE1</label>
    </interactant>
    <organismsDiffer>false</organismsDiffer>
    <experiments>6</experiments>
</comment>
<comment type="interaction">
    <interactant intactId="EBI-2130429">
        <id>Q9BYV2</id>
    </interactant>
    <interactant intactId="EBI-747719">
        <id>Q96H20</id>
        <label>SNF8</label>
    </interactant>
    <organismsDiffer>false</organismsDiffer>
    <experiments>6</experiments>
</comment>
<comment type="interaction">
    <interactant intactId="EBI-2130429">
        <id>Q9BYV2</id>
    </interactant>
    <interactant intactId="EBI-742688">
        <id>Q9NZD8</id>
        <label>SPG21</label>
    </interactant>
    <organismsDiffer>false</organismsDiffer>
    <experiments>6</experiments>
</comment>
<comment type="interaction">
    <interactant intactId="EBI-2130429">
        <id>Q9BYV2</id>
    </interactant>
    <interactant intactId="EBI-2836158">
        <id>Q9H741</id>
        <label>SPRING1</label>
    </interactant>
    <organismsDiffer>false</organismsDiffer>
    <experiments>3</experiments>
</comment>
<comment type="interaction">
    <interactant intactId="EBI-2130429">
        <id>Q9BYV2</id>
    </interactant>
    <interactant intactId="EBI-12029182">
        <id>Q6ZRS2-3</id>
        <label>SRCAP</label>
    </interactant>
    <organismsDiffer>false</organismsDiffer>
    <experiments>3</experiments>
</comment>
<comment type="interaction">
    <interactant intactId="EBI-2130429">
        <id>Q9BYV2</id>
    </interactant>
    <interactant intactId="EBI-2212028">
        <id>Q9Y2D8</id>
        <label>SSX2IP</label>
    </interactant>
    <organismsDiffer>false</organismsDiffer>
    <experiments>3</experiments>
</comment>
<comment type="interaction">
    <interactant intactId="EBI-2130429">
        <id>Q9BYV2</id>
    </interactant>
    <interactant intactId="EBI-8787464">
        <id>Q9NU19</id>
        <label>TBC1D22B</label>
    </interactant>
    <organismsDiffer>false</organismsDiffer>
    <experiments>5</experiments>
</comment>
<comment type="interaction">
    <interactant intactId="EBI-2130429">
        <id>Q9BYV2</id>
    </interactant>
    <interactant intactId="EBI-11974855">
        <id>Q9Y4C2-2</id>
        <label>TCAF1</label>
    </interactant>
    <organismsDiffer>false</organismsDiffer>
    <experiments>3</experiments>
</comment>
<comment type="interaction">
    <interactant intactId="EBI-2130429">
        <id>Q9BYV2</id>
    </interactant>
    <interactant intactId="EBI-710310">
        <id>Q15560</id>
        <label>TCEA2</label>
    </interactant>
    <organismsDiffer>false</organismsDiffer>
    <experiments>6</experiments>
</comment>
<comment type="interaction">
    <interactant intactId="EBI-2130429">
        <id>Q9BYV2</id>
    </interactant>
    <interactant intactId="EBI-11955057">
        <id>Q8N8B7-2</id>
        <label>TCEANC</label>
    </interactant>
    <organismsDiffer>false</organismsDiffer>
    <experiments>3</experiments>
</comment>
<comment type="interaction">
    <interactant intactId="EBI-2130429">
        <id>Q9BYV2</id>
    </interactant>
    <interactant intactId="EBI-740781">
        <id>Q9BT92</id>
        <label>TCHP</label>
    </interactant>
    <organismsDiffer>false</organismsDiffer>
    <experiments>3</experiments>
</comment>
<comment type="interaction">
    <interactant intactId="EBI-2130429">
        <id>Q9BYV2</id>
    </interactant>
    <interactant intactId="EBI-747736">
        <id>Q15561</id>
        <label>TEAD4</label>
    </interactant>
    <organismsDiffer>false</organismsDiffer>
    <experiments>3</experiments>
</comment>
<comment type="interaction">
    <interactant intactId="EBI-2130429">
        <id>Q9BYV2</id>
    </interactant>
    <interactant intactId="EBI-11139477">
        <id>Q96N21</id>
        <label>TEPSIN</label>
    </interactant>
    <organismsDiffer>false</organismsDiffer>
    <experiments>3</experiments>
</comment>
<comment type="interaction">
    <interactant intactId="EBI-2130429">
        <id>Q9BYV2</id>
    </interactant>
    <interactant intactId="EBI-1765605">
        <id>Q96FV9</id>
        <label>THOC1</label>
    </interactant>
    <organismsDiffer>false</organismsDiffer>
    <experiments>3</experiments>
</comment>
<comment type="interaction">
    <interactant intactId="EBI-2130429">
        <id>Q9BYV2</id>
    </interactant>
    <interactant intactId="EBI-2814077">
        <id>Q5JTD0</id>
        <label>TJAP1</label>
    </interactant>
    <organismsDiffer>false</organismsDiffer>
    <experiments>3</experiments>
</comment>
<comment type="interaction">
    <interactant intactId="EBI-2130429">
        <id>Q9BYV2</id>
    </interactant>
    <interactant intactId="EBI-11059915">
        <id>Q8N7C3</id>
        <label>TRIML2</label>
    </interactant>
    <organismsDiffer>false</organismsDiffer>
    <experiments>3</experiments>
</comment>
<comment type="interaction">
    <interactant intactId="EBI-2130429">
        <id>Q9BYV2</id>
    </interactant>
    <interactant intactId="EBI-346882">
        <id>Q99816</id>
        <label>TSG101</label>
    </interactant>
    <organismsDiffer>false</organismsDiffer>
    <experiments>3</experiments>
</comment>
<comment type="interaction">
    <interactant intactId="EBI-2130429">
        <id>Q9BYV2</id>
    </interactant>
    <interactant intactId="EBI-9053916">
        <id>Q63HK5</id>
        <label>TSHZ3</label>
    </interactant>
    <organismsDiffer>false</organismsDiffer>
    <experiments>6</experiments>
</comment>
<comment type="interaction">
    <interactant intactId="EBI-2130429">
        <id>Q9BYV2</id>
    </interactant>
    <interactant intactId="EBI-3918381">
        <id>Q96PN8</id>
        <label>TSSK3</label>
    </interactant>
    <organismsDiffer>false</organismsDiffer>
    <experiments>3</experiments>
</comment>
<comment type="interaction">
    <interactant intactId="EBI-2130429">
        <id>Q9BYV2</id>
    </interactant>
    <interactant intactId="EBI-6447954">
        <id>Q5W5X9</id>
        <label>TTC23</label>
    </interactant>
    <organismsDiffer>false</organismsDiffer>
    <experiments>3</experiments>
</comment>
<comment type="interaction">
    <interactant intactId="EBI-2130429">
        <id>Q9BYV2</id>
    </interactant>
    <interactant intactId="EBI-9090990">
        <id>Q5W5X9-3</id>
        <label>TTC23</label>
    </interactant>
    <organismsDiffer>false</organismsDiffer>
    <experiments>3</experiments>
</comment>
<comment type="interaction">
    <interactant intactId="EBI-2130429">
        <id>Q9BYV2</id>
    </interactant>
    <interactant intactId="EBI-2851213">
        <id>Q8N5M4</id>
        <label>TTC9C</label>
    </interactant>
    <organismsDiffer>false</organismsDiffer>
    <experiments>3</experiments>
</comment>
<comment type="interaction">
    <interactant intactId="EBI-2130429">
        <id>Q9BYV2</id>
    </interactant>
    <interactant intactId="EBI-743540">
        <id>P51668</id>
        <label>UBE2D1</label>
    </interactant>
    <organismsDiffer>false</organismsDiffer>
    <experiments>3</experiments>
</comment>
<comment type="interaction">
    <interactant intactId="EBI-2130429">
        <id>Q9BYV2</id>
    </interactant>
    <interactant intactId="EBI-347677">
        <id>P62837</id>
        <label>UBE2D2</label>
    </interactant>
    <organismsDiffer>false</organismsDiffer>
    <experiments>3</experiments>
</comment>
<comment type="interaction">
    <interactant intactId="EBI-2130429">
        <id>Q9BYV2</id>
    </interactant>
    <interactant intactId="EBI-745527">
        <id>Q9Y2X8</id>
        <label>UBE2D4</label>
    </interactant>
    <organismsDiffer>false</organismsDiffer>
    <experiments>3</experiments>
</comment>
<comment type="interaction">
    <interactant intactId="EBI-2130429">
        <id>Q9BYV2</id>
    </interactant>
    <interactant intactId="EBI-10180829">
        <id>Q7KZS0</id>
        <label>UBE2I</label>
    </interactant>
    <organismsDiffer>false</organismsDiffer>
    <experiments>3</experiments>
</comment>
<comment type="interaction">
    <interactant intactId="EBI-2130429">
        <id>Q9BYV2</id>
    </interactant>
    <interactant intactId="EBI-356983">
        <id>P11441</id>
        <label>UBL4A</label>
    </interactant>
    <organismsDiffer>false</organismsDiffer>
    <experiments>3</experiments>
</comment>
<comment type="interaction">
    <interactant intactId="EBI-2130429">
        <id>Q9BYV2</id>
    </interactant>
    <interactant intactId="EBI-739895">
        <id>Q8N6Y0</id>
        <label>USHBP1</label>
    </interactant>
    <organismsDiffer>false</organismsDiffer>
    <experiments>6</experiments>
</comment>
<comment type="interaction">
    <interactant intactId="EBI-2130429">
        <id>Q9BYV2</id>
    </interactant>
    <interactant intactId="EBI-10225961">
        <id>Q08E77</id>
        <label>UTP14C</label>
    </interactant>
    <organismsDiffer>false</organismsDiffer>
    <experiments>3</experiments>
</comment>
<comment type="interaction">
    <interactant intactId="EBI-2130429">
        <id>Q9BYV2</id>
    </interactant>
    <interactant intactId="EBI-10243107">
        <id>Q548N1</id>
        <label>VPS28</label>
    </interactant>
    <organismsDiffer>false</organismsDiffer>
    <experiments>3</experiments>
</comment>
<comment type="interaction">
    <interactant intactId="EBI-2130429">
        <id>Q9BYV2</id>
    </interactant>
    <interactant intactId="EBI-9031083">
        <id>Q9Y2B5</id>
        <label>VPS9D1</label>
    </interactant>
    <organismsDiffer>false</organismsDiffer>
    <experiments>3</experiments>
</comment>
<comment type="interaction">
    <interactant intactId="EBI-2130429">
        <id>Q9BYV2</id>
    </interactant>
    <interactant intactId="EBI-2815120">
        <id>Q6GPH4</id>
        <label>XAF1</label>
    </interactant>
    <organismsDiffer>false</organismsDiffer>
    <experiments>6</experiments>
</comment>
<comment type="interaction">
    <interactant intactId="EBI-2130429">
        <id>Q9BYV2</id>
    </interactant>
    <interactant intactId="EBI-711925">
        <id>Q05516</id>
        <label>ZBTB16</label>
    </interactant>
    <organismsDiffer>false</organismsDiffer>
    <experiments>6</experiments>
</comment>
<comment type="interaction">
    <interactant intactId="EBI-2130429">
        <id>Q9BYV2</id>
    </interactant>
    <interactant intactId="EBI-10237226">
        <id>Q15911-2</id>
        <label>ZFHX3</label>
    </interactant>
    <organismsDiffer>false</organismsDiffer>
    <experiments>3</experiments>
</comment>
<comment type="interaction">
    <interactant intactId="EBI-2130429">
        <id>Q9BYV2</id>
    </interactant>
    <interactant intactId="EBI-3439227">
        <id>Q8N5A5</id>
        <label>ZGPAT</label>
    </interactant>
    <organismsDiffer>false</organismsDiffer>
    <experiments>3</experiments>
</comment>
<comment type="interaction">
    <interactant intactId="EBI-2130429">
        <id>Q9BYV2</id>
    </interactant>
    <interactant intactId="EBI-10177272">
        <id>P15622-3</id>
        <label>ZNF250</label>
    </interactant>
    <organismsDiffer>false</organismsDiffer>
    <experiments>6</experiments>
</comment>
<comment type="interaction">
    <interactant intactId="EBI-2130429">
        <id>Q9BYV2</id>
    </interactant>
    <interactant intactId="EBI-740727">
        <id>Q8TAU3</id>
        <label>ZNF417</label>
    </interactant>
    <organismsDiffer>false</organismsDiffer>
    <experiments>6</experiments>
</comment>
<comment type="interaction">
    <interactant intactId="EBI-2130429">
        <id>Q9BYV2</id>
    </interactant>
    <interactant intactId="EBI-10172590">
        <id>Q7Z3I7</id>
        <label>ZNF572</label>
    </interactant>
    <organismsDiffer>false</organismsDiffer>
    <experiments>9</experiments>
</comment>
<comment type="interaction">
    <interactant intactId="EBI-2130429">
        <id>Q9BYV2</id>
    </interactant>
    <interactant intactId="EBI-6427977">
        <id>Q96SQ5</id>
        <label>ZNF587</label>
    </interactant>
    <organismsDiffer>false</organismsDiffer>
    <experiments>6</experiments>
</comment>
<comment type="interaction">
    <interactant intactId="EBI-2130429">
        <id>Q9BYV2</id>
    </interactant>
    <interactant intactId="EBI-9977437">
        <id>A8K2R3</id>
    </interactant>
    <organismsDiffer>false</organismsDiffer>
    <experiments>3</experiments>
</comment>
<comment type="interaction">
    <interactant intactId="EBI-2130429">
        <id>Q9BYV2</id>
    </interactant>
    <interactant intactId="EBI-10296986">
        <id>Q9BRL5</id>
    </interactant>
    <organismsDiffer>false</organismsDiffer>
    <experiments>3</experiments>
</comment>
<comment type="interaction">
    <interactant intactId="EBI-2130429">
        <id>Q9BYV2</id>
    </interactant>
    <interactant intactId="EBI-25492395">
        <id>PRO_0000449633</id>
        <label>rep</label>
        <dbReference type="UniProtKB" id="P0DTD1"/>
    </interactant>
    <organismsDiffer>true</organismsDiffer>
    <experiments>3</experiments>
</comment>
<comment type="subcellular location">
    <subcellularLocation>
        <location evidence="1">Cytoplasm</location>
        <location evidence="1">Cytoskeleton</location>
    </subcellularLocation>
    <subcellularLocation>
        <location evidence="1">Cytoplasm</location>
        <location evidence="1">Myofibril</location>
        <location evidence="1">Sarcomere</location>
        <location evidence="1">Z line</location>
    </subcellularLocation>
    <text evidence="1">Associates with microtubules. Localizes to the Z-lines in skeletal muscles (By similarity).</text>
</comment>
<comment type="alternative products">
    <event type="alternative splicing"/>
    <isoform>
        <id>Q9BYV2-1</id>
        <name>1</name>
        <sequence type="displayed"/>
    </isoform>
    <isoform>
        <id>Q9BYV2-2</id>
        <name>2</name>
        <sequence type="described" ref="VSP_016061"/>
    </isoform>
</comment>
<comment type="tissue specificity">
    <text evidence="7">Specifically expressed in heart and skeletal muscle.</text>
</comment>
<comment type="sequence caution" evidence="10">
    <conflict type="erroneous initiation">
        <sequence resource="EMBL-CDS" id="AAY24296"/>
    </conflict>
</comment>
<comment type="sequence caution" evidence="10">
    <conflict type="erroneous initiation">
        <sequence resource="EMBL-CDS" id="CAC32841"/>
    </conflict>
</comment>
<comment type="sequence caution" evidence="10">
    <conflict type="erroneous initiation">
        <sequence resource="EMBL-CDS" id="CAC32842"/>
    </conflict>
</comment>
<sequence>MNFTVGFKPLLGDAHSMDNLEKQLICPICLEMFSKPVVILPCQHNLCRKCANDVFQASNPLWQSRGSTTVSSGGRFRCPSCRHEVVLDRHGVYGLQRNLLVENIIDIYKQESSRPLHSKAEQHLMCEEHEEEKINIYCLSCEVPTCSLCKVFGAHKDCEVAPLPTIYKRQKSELSDGIAMLVAGNDRVQAVITQMEEVCQTIEDNSRRQKQLLNQRFESLCAVLEERKGELLQALAREQEEKLQRVRGLIRQYGDHLEASSKLVESAIQSMEEPQMALYLQQAKELINKVGAMSKVELAGRPEPGYESMEQFTVRVEHVAEMLRTIDFQPGASGEEEEVAPDGEEGSAGPEEERPDGP</sequence>
<reference key="1">
    <citation type="journal article" date="2001" name="J. Mol. Biol.">
        <title>Identification of muscle specific ring finger proteins as potential regulators of the titin kinase domain.</title>
        <authorList>
            <person name="Centner T."/>
            <person name="Yano J."/>
            <person name="Kimura E."/>
            <person name="McElhinny A.S."/>
            <person name="Pelin K."/>
            <person name="Witt C.C."/>
            <person name="Bang M.-L."/>
            <person name="Trombitas K."/>
            <person name="Granzier H."/>
            <person name="Gregorio C.C."/>
            <person name="Sorimachi H."/>
            <person name="Labeit S."/>
        </authorList>
    </citation>
    <scope>NUCLEOTIDE SEQUENCE [MRNA] (ISOFORMS 1 AND 2)</scope>
    <scope>TISSUE SPECIFICITY</scope>
    <scope>OLIGOMERIZATION</scope>
    <scope>INTERACTION WITH TRIM63 AND TRIM55</scope>
</reference>
<reference key="2">
    <citation type="journal article" date="2005" name="Nature">
        <title>Generation and annotation of the DNA sequences of human chromosomes 2 and 4.</title>
        <authorList>
            <person name="Hillier L.W."/>
            <person name="Graves T.A."/>
            <person name="Fulton R.S."/>
            <person name="Fulton L.A."/>
            <person name="Pepin K.H."/>
            <person name="Minx P."/>
            <person name="Wagner-McPherson C."/>
            <person name="Layman D."/>
            <person name="Wylie K."/>
            <person name="Sekhon M."/>
            <person name="Becker M.C."/>
            <person name="Fewell G.A."/>
            <person name="Delehaunty K.D."/>
            <person name="Miner T.L."/>
            <person name="Nash W.E."/>
            <person name="Kremitzki C."/>
            <person name="Oddy L."/>
            <person name="Du H."/>
            <person name="Sun H."/>
            <person name="Bradshaw-Cordum H."/>
            <person name="Ali J."/>
            <person name="Carter J."/>
            <person name="Cordes M."/>
            <person name="Harris A."/>
            <person name="Isak A."/>
            <person name="van Brunt A."/>
            <person name="Nguyen C."/>
            <person name="Du F."/>
            <person name="Courtney L."/>
            <person name="Kalicki J."/>
            <person name="Ozersky P."/>
            <person name="Abbott S."/>
            <person name="Armstrong J."/>
            <person name="Belter E.A."/>
            <person name="Caruso L."/>
            <person name="Cedroni M."/>
            <person name="Cotton M."/>
            <person name="Davidson T."/>
            <person name="Desai A."/>
            <person name="Elliott G."/>
            <person name="Erb T."/>
            <person name="Fronick C."/>
            <person name="Gaige T."/>
            <person name="Haakenson W."/>
            <person name="Haglund K."/>
            <person name="Holmes A."/>
            <person name="Harkins R."/>
            <person name="Kim K."/>
            <person name="Kruchowski S.S."/>
            <person name="Strong C.M."/>
            <person name="Grewal N."/>
            <person name="Goyea E."/>
            <person name="Hou S."/>
            <person name="Levy A."/>
            <person name="Martinka S."/>
            <person name="Mead K."/>
            <person name="McLellan M.D."/>
            <person name="Meyer R."/>
            <person name="Randall-Maher J."/>
            <person name="Tomlinson C."/>
            <person name="Dauphin-Kohlberg S."/>
            <person name="Kozlowicz-Reilly A."/>
            <person name="Shah N."/>
            <person name="Swearengen-Shahid S."/>
            <person name="Snider J."/>
            <person name="Strong J.T."/>
            <person name="Thompson J."/>
            <person name="Yoakum M."/>
            <person name="Leonard S."/>
            <person name="Pearman C."/>
            <person name="Trani L."/>
            <person name="Radionenko M."/>
            <person name="Waligorski J.E."/>
            <person name="Wang C."/>
            <person name="Rock S.M."/>
            <person name="Tin-Wollam A.-M."/>
            <person name="Maupin R."/>
            <person name="Latreille P."/>
            <person name="Wendl M.C."/>
            <person name="Yang S.-P."/>
            <person name="Pohl C."/>
            <person name="Wallis J.W."/>
            <person name="Spieth J."/>
            <person name="Bieri T.A."/>
            <person name="Berkowicz N."/>
            <person name="Nelson J.O."/>
            <person name="Osborne J."/>
            <person name="Ding L."/>
            <person name="Meyer R."/>
            <person name="Sabo A."/>
            <person name="Shotland Y."/>
            <person name="Sinha P."/>
            <person name="Wohldmann P.E."/>
            <person name="Cook L.L."/>
            <person name="Hickenbotham M.T."/>
            <person name="Eldred J."/>
            <person name="Williams D."/>
            <person name="Jones T.A."/>
            <person name="She X."/>
            <person name="Ciccarelli F.D."/>
            <person name="Izaurralde E."/>
            <person name="Taylor J."/>
            <person name="Schmutz J."/>
            <person name="Myers R.M."/>
            <person name="Cox D.R."/>
            <person name="Huang X."/>
            <person name="McPherson J.D."/>
            <person name="Mardis E.R."/>
            <person name="Clifton S.W."/>
            <person name="Warren W.C."/>
            <person name="Chinwalla A.T."/>
            <person name="Eddy S.R."/>
            <person name="Marra M.A."/>
            <person name="Ovcharenko I."/>
            <person name="Furey T.S."/>
            <person name="Miller W."/>
            <person name="Eichler E.E."/>
            <person name="Bork P."/>
            <person name="Suyama M."/>
            <person name="Torrents D."/>
            <person name="Waterston R.H."/>
            <person name="Wilson R.K."/>
        </authorList>
    </citation>
    <scope>NUCLEOTIDE SEQUENCE [LARGE SCALE GENOMIC DNA]</scope>
</reference>
<reference key="3">
    <citation type="submission" date="2005-09" db="EMBL/GenBank/DDBJ databases">
        <authorList>
            <person name="Mural R.J."/>
            <person name="Istrail S."/>
            <person name="Sutton G.G."/>
            <person name="Florea L."/>
            <person name="Halpern A.L."/>
            <person name="Mobarry C.M."/>
            <person name="Lippert R."/>
            <person name="Walenz B."/>
            <person name="Shatkay H."/>
            <person name="Dew I."/>
            <person name="Miller J.R."/>
            <person name="Flanigan M.J."/>
            <person name="Edwards N.J."/>
            <person name="Bolanos R."/>
            <person name="Fasulo D."/>
            <person name="Halldorsson B.V."/>
            <person name="Hannenhalli S."/>
            <person name="Turner R."/>
            <person name="Yooseph S."/>
            <person name="Lu F."/>
            <person name="Nusskern D.R."/>
            <person name="Shue B.C."/>
            <person name="Zheng X.H."/>
            <person name="Zhong F."/>
            <person name="Delcher A.L."/>
            <person name="Huson D.H."/>
            <person name="Kravitz S.A."/>
            <person name="Mouchard L."/>
            <person name="Reinert K."/>
            <person name="Remington K.A."/>
            <person name="Clark A.G."/>
            <person name="Waterman M.S."/>
            <person name="Eichler E.E."/>
            <person name="Adams M.D."/>
            <person name="Hunkapiller M.W."/>
            <person name="Myers E.W."/>
            <person name="Venter J.C."/>
        </authorList>
    </citation>
    <scope>NUCLEOTIDE SEQUENCE [LARGE SCALE GENOMIC DNA]</scope>
</reference>
<reference key="4">
    <citation type="journal article" date="2004" name="Genome Res.">
        <title>The status, quality, and expansion of the NIH full-length cDNA project: the Mammalian Gene Collection (MGC).</title>
        <authorList>
            <consortium name="The MGC Project Team"/>
        </authorList>
    </citation>
    <scope>NUCLEOTIDE SEQUENCE [LARGE SCALE MRNA]</scope>
</reference>
<reference key="5">
    <citation type="submission" date="2011-02" db="PDB data bank">
        <title>The B-box domain of TRIM54.</title>
        <authorList>
            <consortium name="Structural genomics consortium (SGC)"/>
        </authorList>
    </citation>
    <scope>X-RAY CRYSTALLOGRAPHY (2.15 ANGSTROMS) OF 122-168 IN COMPLEX WITH ZINC IONS</scope>
</reference>
<dbReference type="EMBL" id="AJ291714">
    <property type="protein sequence ID" value="CAC32841.1"/>
    <property type="status" value="ALT_INIT"/>
    <property type="molecule type" value="mRNA"/>
</dbReference>
<dbReference type="EMBL" id="AJ291714">
    <property type="protein sequence ID" value="CAC32842.1"/>
    <property type="status" value="ALT_INIT"/>
    <property type="molecule type" value="mRNA"/>
</dbReference>
<dbReference type="EMBL" id="AC013413">
    <property type="protein sequence ID" value="AAY24296.1"/>
    <property type="status" value="ALT_INIT"/>
    <property type="molecule type" value="Genomic_DNA"/>
</dbReference>
<dbReference type="EMBL" id="CH471053">
    <property type="protein sequence ID" value="EAX00606.1"/>
    <property type="molecule type" value="Genomic_DNA"/>
</dbReference>
<dbReference type="EMBL" id="BC141807">
    <property type="protein sequence ID" value="AAI41808.1"/>
    <property type="molecule type" value="mRNA"/>
</dbReference>
<dbReference type="CCDS" id="CCDS1745.2">
    <molecule id="Q9BYV2-2"/>
</dbReference>
<dbReference type="CCDS" id="CCDS1746.2">
    <molecule id="Q9BYV2-1"/>
</dbReference>
<dbReference type="RefSeq" id="NP_115935.3">
    <molecule id="Q9BYV2-2"/>
    <property type="nucleotide sequence ID" value="NM_032546.3"/>
</dbReference>
<dbReference type="RefSeq" id="NP_912730.2">
    <molecule id="Q9BYV2-1"/>
    <property type="nucleotide sequence ID" value="NM_187841.3"/>
</dbReference>
<dbReference type="RefSeq" id="XP_024308778.1">
    <molecule id="Q9BYV2-1"/>
    <property type="nucleotide sequence ID" value="XM_024453010.1"/>
</dbReference>
<dbReference type="RefSeq" id="XP_054199045.1">
    <molecule id="Q9BYV2-1"/>
    <property type="nucleotide sequence ID" value="XM_054343070.1"/>
</dbReference>
<dbReference type="RefSeq" id="XP_054199046.1">
    <molecule id="Q9BYV2-1"/>
    <property type="nucleotide sequence ID" value="XM_054343071.1"/>
</dbReference>
<dbReference type="PDB" id="3Q1D">
    <property type="method" value="X-ray"/>
    <property type="resolution" value="2.15 A"/>
    <property type="chains" value="A=122-168"/>
</dbReference>
<dbReference type="PDBsum" id="3Q1D"/>
<dbReference type="SMR" id="Q9BYV2"/>
<dbReference type="BioGRID" id="121415">
    <property type="interactions" value="322"/>
</dbReference>
<dbReference type="FunCoup" id="Q9BYV2">
    <property type="interactions" value="100"/>
</dbReference>
<dbReference type="IntAct" id="Q9BYV2">
    <property type="interactions" value="338"/>
</dbReference>
<dbReference type="STRING" id="9606.ENSP00000296098"/>
<dbReference type="iPTMnet" id="Q9BYV2"/>
<dbReference type="PhosphoSitePlus" id="Q9BYV2"/>
<dbReference type="BioMuta" id="TRIM54"/>
<dbReference type="DMDM" id="209572715"/>
<dbReference type="jPOST" id="Q9BYV2"/>
<dbReference type="MassIVE" id="Q9BYV2"/>
<dbReference type="PeptideAtlas" id="Q9BYV2"/>
<dbReference type="ProteomicsDB" id="79712">
    <molecule id="Q9BYV2-1"/>
</dbReference>
<dbReference type="ProteomicsDB" id="79713">
    <molecule id="Q9BYV2-2"/>
</dbReference>
<dbReference type="Antibodypedia" id="13583">
    <property type="antibodies" value="377 antibodies from 31 providers"/>
</dbReference>
<dbReference type="DNASU" id="57159"/>
<dbReference type="Ensembl" id="ENST00000296098.4">
    <molecule id="Q9BYV2-2"/>
    <property type="protein sequence ID" value="ENSP00000296098.4"/>
    <property type="gene ID" value="ENSG00000138100.14"/>
</dbReference>
<dbReference type="Ensembl" id="ENST00000380075.7">
    <molecule id="Q9BYV2-1"/>
    <property type="protein sequence ID" value="ENSP00000369415.3"/>
    <property type="gene ID" value="ENSG00000138100.14"/>
</dbReference>
<dbReference type="GeneID" id="57159"/>
<dbReference type="KEGG" id="hsa:57159"/>
<dbReference type="MANE-Select" id="ENST00000380075.7">
    <property type="protein sequence ID" value="ENSP00000369415.3"/>
    <property type="RefSeq nucleotide sequence ID" value="NM_187841.3"/>
    <property type="RefSeq protein sequence ID" value="NP_912730.2"/>
</dbReference>
<dbReference type="UCSC" id="uc002rjn.4">
    <molecule id="Q9BYV2-1"/>
    <property type="organism name" value="human"/>
</dbReference>
<dbReference type="AGR" id="HGNC:16008"/>
<dbReference type="CTD" id="57159"/>
<dbReference type="DisGeNET" id="57159"/>
<dbReference type="GeneCards" id="TRIM54"/>
<dbReference type="HGNC" id="HGNC:16008">
    <property type="gene designation" value="TRIM54"/>
</dbReference>
<dbReference type="HPA" id="ENSG00000138100">
    <property type="expression patterns" value="Group enriched (heart muscle, skeletal muscle, tongue)"/>
</dbReference>
<dbReference type="MalaCards" id="TRIM54"/>
<dbReference type="MIM" id="606474">
    <property type="type" value="gene"/>
</dbReference>
<dbReference type="neXtProt" id="NX_Q9BYV2"/>
<dbReference type="OpenTargets" id="ENSG00000138100"/>
<dbReference type="PharmGKB" id="PA34434"/>
<dbReference type="VEuPathDB" id="HostDB:ENSG00000138100"/>
<dbReference type="GeneTree" id="ENSGT00940000154004"/>
<dbReference type="HOGENOM" id="CLU_013137_5_1_1"/>
<dbReference type="InParanoid" id="Q9BYV2"/>
<dbReference type="OMA" id="MEDICRT"/>
<dbReference type="OrthoDB" id="5351233at2759"/>
<dbReference type="PAN-GO" id="Q9BYV2">
    <property type="GO annotations" value="3 GO annotations based on evolutionary models"/>
</dbReference>
<dbReference type="PhylomeDB" id="Q9BYV2"/>
<dbReference type="TreeFam" id="TF331669"/>
<dbReference type="PathwayCommons" id="Q9BYV2"/>
<dbReference type="SignaLink" id="Q9BYV2"/>
<dbReference type="SIGNOR" id="Q9BYV2"/>
<dbReference type="BioGRID-ORCS" id="57159">
    <property type="hits" value="10 hits in 1182 CRISPR screens"/>
</dbReference>
<dbReference type="ChiTaRS" id="TRIM54">
    <property type="organism name" value="human"/>
</dbReference>
<dbReference type="EvolutionaryTrace" id="Q9BYV2"/>
<dbReference type="GenomeRNAi" id="57159"/>
<dbReference type="Pharos" id="Q9BYV2">
    <property type="development level" value="Tbio"/>
</dbReference>
<dbReference type="PRO" id="PR:Q9BYV2"/>
<dbReference type="Proteomes" id="UP000005640">
    <property type="component" value="Chromosome 2"/>
</dbReference>
<dbReference type="RNAct" id="Q9BYV2">
    <property type="molecule type" value="protein"/>
</dbReference>
<dbReference type="Bgee" id="ENSG00000138100">
    <property type="expression patterns" value="Expressed in apex of heart and 101 other cell types or tissues"/>
</dbReference>
<dbReference type="GO" id="GO:0005737">
    <property type="term" value="C:cytoplasm"/>
    <property type="evidence" value="ECO:0000318"/>
    <property type="project" value="GO_Central"/>
</dbReference>
<dbReference type="GO" id="GO:0005874">
    <property type="term" value="C:microtubule"/>
    <property type="evidence" value="ECO:0000303"/>
    <property type="project" value="UniProtKB"/>
</dbReference>
<dbReference type="GO" id="GO:0005875">
    <property type="term" value="C:microtubule associated complex"/>
    <property type="evidence" value="ECO:0007669"/>
    <property type="project" value="Ensembl"/>
</dbReference>
<dbReference type="GO" id="GO:0030018">
    <property type="term" value="C:Z disc"/>
    <property type="evidence" value="ECO:0007669"/>
    <property type="project" value="UniProtKB-SubCell"/>
</dbReference>
<dbReference type="GO" id="GO:0008017">
    <property type="term" value="F:microtubule binding"/>
    <property type="evidence" value="ECO:0007669"/>
    <property type="project" value="Ensembl"/>
</dbReference>
<dbReference type="GO" id="GO:0061630">
    <property type="term" value="F:ubiquitin protein ligase activity"/>
    <property type="evidence" value="ECO:0000318"/>
    <property type="project" value="GO_Central"/>
</dbReference>
<dbReference type="GO" id="GO:0008270">
    <property type="term" value="F:zinc ion binding"/>
    <property type="evidence" value="ECO:0000303"/>
    <property type="project" value="UniProtKB"/>
</dbReference>
<dbReference type="GO" id="GO:0030154">
    <property type="term" value="P:cell differentiation"/>
    <property type="evidence" value="ECO:0007669"/>
    <property type="project" value="UniProtKB-KW"/>
</dbReference>
<dbReference type="GO" id="GO:0045087">
    <property type="term" value="P:innate immune response"/>
    <property type="evidence" value="ECO:0000318"/>
    <property type="project" value="GO_Central"/>
</dbReference>
<dbReference type="GO" id="GO:0007017">
    <property type="term" value="P:microtubule-based process"/>
    <property type="evidence" value="ECO:0000303"/>
    <property type="project" value="UniProtKB"/>
</dbReference>
<dbReference type="GO" id="GO:0007026">
    <property type="term" value="P:negative regulation of microtubule depolymerization"/>
    <property type="evidence" value="ECO:0000303"/>
    <property type="project" value="UniProtKB"/>
</dbReference>
<dbReference type="GO" id="GO:0007165">
    <property type="term" value="P:signal transduction"/>
    <property type="evidence" value="ECO:0000303"/>
    <property type="project" value="UniProtKB"/>
</dbReference>
<dbReference type="CDD" id="cd19833">
    <property type="entry name" value="Bbox2_MuRF3_C-II"/>
    <property type="match status" value="1"/>
</dbReference>
<dbReference type="CDD" id="cd16761">
    <property type="entry name" value="RING-HC_MuRF3"/>
    <property type="match status" value="1"/>
</dbReference>
<dbReference type="FunFam" id="3.30.40.10:FF:000014">
    <property type="entry name" value="probable E3 ubiquitin-protein ligase MID2"/>
    <property type="match status" value="1"/>
</dbReference>
<dbReference type="FunFam" id="1.20.5.170:FF:000022">
    <property type="entry name" value="Tripartite motif containing 55"/>
    <property type="match status" value="1"/>
</dbReference>
<dbReference type="Gene3D" id="1.20.5.170">
    <property type="match status" value="1"/>
</dbReference>
<dbReference type="Gene3D" id="3.30.160.60">
    <property type="entry name" value="Classic Zinc Finger"/>
    <property type="match status" value="1"/>
</dbReference>
<dbReference type="Gene3D" id="3.30.40.10">
    <property type="entry name" value="Zinc/RING finger domain, C3HC4 (zinc finger)"/>
    <property type="match status" value="1"/>
</dbReference>
<dbReference type="InterPro" id="IPR017903">
    <property type="entry name" value="COS_domain"/>
</dbReference>
<dbReference type="InterPro" id="IPR050143">
    <property type="entry name" value="TRIM/RBCC"/>
</dbReference>
<dbReference type="InterPro" id="IPR033492">
    <property type="entry name" value="Trim54_Bbox2_Zfn"/>
</dbReference>
<dbReference type="InterPro" id="IPR042752">
    <property type="entry name" value="TRIM54_RING-HC"/>
</dbReference>
<dbReference type="InterPro" id="IPR027370">
    <property type="entry name" value="Znf-RING_euk"/>
</dbReference>
<dbReference type="InterPro" id="IPR000315">
    <property type="entry name" value="Znf_B-box"/>
</dbReference>
<dbReference type="InterPro" id="IPR001841">
    <property type="entry name" value="Znf_RING"/>
</dbReference>
<dbReference type="InterPro" id="IPR013083">
    <property type="entry name" value="Znf_RING/FYVE/PHD"/>
</dbReference>
<dbReference type="InterPro" id="IPR017907">
    <property type="entry name" value="Znf_RING_CS"/>
</dbReference>
<dbReference type="PANTHER" id="PTHR24103">
    <property type="entry name" value="E3 UBIQUITIN-PROTEIN LIGASE TRIM"/>
    <property type="match status" value="1"/>
</dbReference>
<dbReference type="Pfam" id="PF00643">
    <property type="entry name" value="zf-B_box"/>
    <property type="match status" value="1"/>
</dbReference>
<dbReference type="Pfam" id="PF13445">
    <property type="entry name" value="zf-RING_UBOX"/>
    <property type="match status" value="1"/>
</dbReference>
<dbReference type="SMART" id="SM00336">
    <property type="entry name" value="BBOX"/>
    <property type="match status" value="1"/>
</dbReference>
<dbReference type="SMART" id="SM00184">
    <property type="entry name" value="RING"/>
    <property type="match status" value="1"/>
</dbReference>
<dbReference type="SUPFAM" id="SSF57845">
    <property type="entry name" value="B-box zinc-binding domain"/>
    <property type="match status" value="1"/>
</dbReference>
<dbReference type="SUPFAM" id="SSF57850">
    <property type="entry name" value="RING/U-box"/>
    <property type="match status" value="1"/>
</dbReference>
<dbReference type="PROSITE" id="PS51262">
    <property type="entry name" value="COS"/>
    <property type="match status" value="1"/>
</dbReference>
<dbReference type="PROSITE" id="PS50119">
    <property type="entry name" value="ZF_BBOX"/>
    <property type="match status" value="1"/>
</dbReference>
<dbReference type="PROSITE" id="PS00518">
    <property type="entry name" value="ZF_RING_1"/>
    <property type="match status" value="1"/>
</dbReference>
<dbReference type="PROSITE" id="PS50089">
    <property type="entry name" value="ZF_RING_2"/>
    <property type="match status" value="1"/>
</dbReference>
<organism>
    <name type="scientific">Homo sapiens</name>
    <name type="common">Human</name>
    <dbReference type="NCBI Taxonomy" id="9606"/>
    <lineage>
        <taxon>Eukaryota</taxon>
        <taxon>Metazoa</taxon>
        <taxon>Chordata</taxon>
        <taxon>Craniata</taxon>
        <taxon>Vertebrata</taxon>
        <taxon>Euteleostomi</taxon>
        <taxon>Mammalia</taxon>
        <taxon>Eutheria</taxon>
        <taxon>Euarchontoglires</taxon>
        <taxon>Primates</taxon>
        <taxon>Haplorrhini</taxon>
        <taxon>Catarrhini</taxon>
        <taxon>Hominidae</taxon>
        <taxon>Homo</taxon>
    </lineage>
</organism>
<proteinExistence type="evidence at protein level"/>
<protein>
    <recommendedName>
        <fullName>Tripartite motif-containing protein 54</fullName>
    </recommendedName>
    <alternativeName>
        <fullName>Muscle-specific RING finger protein</fullName>
        <shortName>MuRF</shortName>
    </alternativeName>
    <alternativeName>
        <fullName>Muscle-specific RING finger protein 3</fullName>
        <shortName>MuRF-3</shortName>
        <shortName>MuRF3</shortName>
    </alternativeName>
    <alternativeName>
        <fullName>RING finger protein 30</fullName>
    </alternativeName>
</protein>
<name>TRI54_HUMAN</name>
<gene>
    <name type="primary">TRIM54</name>
    <name type="synonym">MURF</name>
    <name type="synonym">MURF3</name>
    <name type="synonym">RNF30</name>
</gene>
<keyword id="KW-0002">3D-structure</keyword>
<keyword id="KW-0025">Alternative splicing</keyword>
<keyword id="KW-0175">Coiled coil</keyword>
<keyword id="KW-0963">Cytoplasm</keyword>
<keyword id="KW-0206">Cytoskeleton</keyword>
<keyword id="KW-0217">Developmental protein</keyword>
<keyword id="KW-0221">Differentiation</keyword>
<keyword id="KW-0479">Metal-binding</keyword>
<keyword id="KW-0493">Microtubule</keyword>
<keyword id="KW-1267">Proteomics identification</keyword>
<keyword id="KW-1185">Reference proteome</keyword>
<keyword id="KW-0862">Zinc</keyword>
<keyword id="KW-0863">Zinc-finger</keyword>
<feature type="chain" id="PRO_0000056282" description="Tripartite motif-containing protein 54">
    <location>
        <begin position="1"/>
        <end position="358"/>
    </location>
</feature>
<feature type="domain" description="COS" evidence="5">
    <location>
        <begin position="271"/>
        <end position="329"/>
    </location>
</feature>
<feature type="zinc finger region" description="RING-type" evidence="4">
    <location>
        <begin position="26"/>
        <end position="82"/>
    </location>
</feature>
<feature type="zinc finger region" description="B box-type" evidence="3">
    <location>
        <begin position="121"/>
        <end position="163"/>
    </location>
</feature>
<feature type="region of interest" description="Mediates microtubule-binding and homooligomerization" evidence="1">
    <location>
        <begin position="168"/>
        <end position="211"/>
    </location>
</feature>
<feature type="region of interest" description="Disordered" evidence="6">
    <location>
        <begin position="326"/>
        <end position="358"/>
    </location>
</feature>
<feature type="coiled-coil region" evidence="2">
    <location>
        <begin position="220"/>
        <end position="258"/>
    </location>
</feature>
<feature type="compositionally biased region" description="Acidic residues" evidence="6">
    <location>
        <begin position="334"/>
        <end position="345"/>
    </location>
</feature>
<feature type="binding site" evidence="3">
    <location>
        <position position="126"/>
    </location>
    <ligand>
        <name>Zn(2+)</name>
        <dbReference type="ChEBI" id="CHEBI:29105"/>
    </ligand>
</feature>
<feature type="binding site" evidence="3">
    <location>
        <position position="129"/>
    </location>
    <ligand>
        <name>Zn(2+)</name>
        <dbReference type="ChEBI" id="CHEBI:29105"/>
    </ligand>
</feature>
<feature type="binding site" evidence="3">
    <location>
        <position position="149"/>
    </location>
    <ligand>
        <name>Zn(2+)</name>
        <dbReference type="ChEBI" id="CHEBI:29105"/>
    </ligand>
</feature>
<feature type="binding site" evidence="3">
    <location>
        <position position="155"/>
    </location>
    <ligand>
        <name>Zn(2+)</name>
        <dbReference type="ChEBI" id="CHEBI:29105"/>
    </ligand>
</feature>
<feature type="splice variant" id="VSP_016061" description="In isoform 2." evidence="9">
    <original>K</original>
    <variation>KKQDLTLLPRLECSGTNTTYCSLDLPSSSDPPILASQNTKIID</variation>
    <location>
        <position position="171"/>
    </location>
</feature>
<feature type="sequence conflict" description="In Ref. 1; CAC32841." evidence="10" ref="1">
    <original>S</original>
    <variation>N</variation>
    <location>
        <position position="172"/>
    </location>
</feature>
<feature type="sequence conflict" description="In Ref. 1; CAC32841/CAC32842." evidence="10" ref="1">
    <original>N</original>
    <variation>T</variation>
    <location>
        <position position="214"/>
    </location>
</feature>
<feature type="strand" evidence="11">
    <location>
        <begin position="127"/>
        <end position="129"/>
    </location>
</feature>
<feature type="strand" evidence="11">
    <location>
        <begin position="132"/>
        <end position="138"/>
    </location>
</feature>
<feature type="turn" evidence="11">
    <location>
        <begin position="139"/>
        <end position="142"/>
    </location>
</feature>
<feature type="strand" evidence="11">
    <location>
        <begin position="143"/>
        <end position="146"/>
    </location>
</feature>
<feature type="helix" evidence="11">
    <location>
        <begin position="147"/>
        <end position="151"/>
    </location>
</feature>
<feature type="turn" evidence="11">
    <location>
        <begin position="154"/>
        <end position="157"/>
    </location>
</feature>
<feature type="strand" evidence="11">
    <location>
        <begin position="160"/>
        <end position="162"/>
    </location>
</feature>
<feature type="helix" evidence="11">
    <location>
        <begin position="164"/>
        <end position="166"/>
    </location>
</feature>